<keyword id="KW-1003">Cell membrane</keyword>
<keyword id="KW-0134">Cell wall</keyword>
<keyword id="KW-0961">Cell wall biogenesis/degradation</keyword>
<keyword id="KW-0325">Glycoprotein</keyword>
<keyword id="KW-0336">GPI-anchor</keyword>
<keyword id="KW-0449">Lipoprotein</keyword>
<keyword id="KW-0472">Membrane</keyword>
<keyword id="KW-1185">Reference proteome</keyword>
<keyword id="KW-0964">Secreted</keyword>
<keyword id="KW-0732">Signal</keyword>
<proteinExistence type="inferred from homology"/>
<dbReference type="EMBL" id="CP017630">
    <property type="protein sequence ID" value="AOW31117.1"/>
    <property type="molecule type" value="Genomic_DNA"/>
</dbReference>
<dbReference type="RefSeq" id="XP_715153.1">
    <property type="nucleotide sequence ID" value="XM_710060.2"/>
</dbReference>
<dbReference type="STRING" id="237561.P0CY22"/>
<dbReference type="GlyCosmos" id="P0CY22">
    <property type="glycosylation" value="1 site, No reported glycans"/>
</dbReference>
<dbReference type="EnsemblFungi" id="CR_03790C_A-T">
    <property type="protein sequence ID" value="CR_03790C_A-T-p1"/>
    <property type="gene ID" value="CR_03790C_A"/>
</dbReference>
<dbReference type="GeneID" id="3643180"/>
<dbReference type="KEGG" id="cal:CAALFM_CR03790CA"/>
<dbReference type="CGD" id="CAL0000185859">
    <property type="gene designation" value="KRE1"/>
</dbReference>
<dbReference type="VEuPathDB" id="FungiDB:CR_03790C_A"/>
<dbReference type="eggNOG" id="ENOG502SFZS">
    <property type="taxonomic scope" value="Eukaryota"/>
</dbReference>
<dbReference type="HOGENOM" id="CLU_156717_1_0_1"/>
<dbReference type="InParanoid" id="P0CY22"/>
<dbReference type="OMA" id="MGIQSSI"/>
<dbReference type="OrthoDB" id="5406216at2759"/>
<dbReference type="PRO" id="PR:P0CY22"/>
<dbReference type="Proteomes" id="UP000000559">
    <property type="component" value="Chromosome R"/>
</dbReference>
<dbReference type="GO" id="GO:0005576">
    <property type="term" value="C:extracellular region"/>
    <property type="evidence" value="ECO:0007669"/>
    <property type="project" value="UniProtKB-KW"/>
</dbReference>
<dbReference type="GO" id="GO:0005886">
    <property type="term" value="C:plasma membrane"/>
    <property type="evidence" value="ECO:0007669"/>
    <property type="project" value="UniProtKB-SubCell"/>
</dbReference>
<dbReference type="GO" id="GO:0098552">
    <property type="term" value="C:side of membrane"/>
    <property type="evidence" value="ECO:0007669"/>
    <property type="project" value="UniProtKB-KW"/>
</dbReference>
<dbReference type="GO" id="GO:0006078">
    <property type="term" value="P:(1-&gt;6)-beta-D-glucan biosynthetic process"/>
    <property type="evidence" value="ECO:0000316"/>
    <property type="project" value="CGD"/>
</dbReference>
<dbReference type="GO" id="GO:0031505">
    <property type="term" value="P:fungal-type cell wall organization"/>
    <property type="evidence" value="ECO:0007669"/>
    <property type="project" value="InterPro"/>
</dbReference>
<dbReference type="InterPro" id="IPR031452">
    <property type="entry name" value="Kre1"/>
</dbReference>
<dbReference type="Pfam" id="PF17056">
    <property type="entry name" value="KRE1"/>
    <property type="match status" value="1"/>
</dbReference>
<feature type="signal peptide" evidence="2">
    <location>
        <begin position="1"/>
        <end position="20"/>
    </location>
</feature>
<feature type="chain" id="PRO_0000021560" description="Protein KRE1">
    <location>
        <begin position="21"/>
        <end position="130"/>
    </location>
</feature>
<feature type="glycosylation site" description="N-linked (GlcNAc...) asparagine" evidence="2">
    <location>
        <position position="109"/>
    </location>
</feature>
<protein>
    <recommendedName>
        <fullName>Protein KRE1</fullName>
    </recommendedName>
</protein>
<evidence type="ECO:0000250" key="1"/>
<evidence type="ECO:0000255" key="2"/>
<evidence type="ECO:0000305" key="3"/>
<accession>P0CY22</accession>
<accession>A0A1D8PSK1</accession>
<accession>P28874</accession>
<accession>Q5A011</accession>
<sequence length="130" mass="13856">MNVNSVIYYILFLFASTILAADKTSSSVSPTLVWVTGTDANGKLATTQSTYYQSFMSTYTTAETPSSGSIGLGSISGTVGEIRTYSMTTISQGNGGLSKFNQNGLEMKNLSFVKLIGVSFIAFISFILLI</sequence>
<reference key="1">
    <citation type="journal article" date="2004" name="Proc. Natl. Acad. Sci. U.S.A.">
        <title>The diploid genome sequence of Candida albicans.</title>
        <authorList>
            <person name="Jones T."/>
            <person name="Federspiel N.A."/>
            <person name="Chibana H."/>
            <person name="Dungan J."/>
            <person name="Kalman S."/>
            <person name="Magee B.B."/>
            <person name="Newport G."/>
            <person name="Thorstenson Y.R."/>
            <person name="Agabian N."/>
            <person name="Magee P.T."/>
            <person name="Davis R.W."/>
            <person name="Scherer S."/>
        </authorList>
    </citation>
    <scope>NUCLEOTIDE SEQUENCE [LARGE SCALE GENOMIC DNA]</scope>
    <source>
        <strain>SC5314 / ATCC MYA-2876</strain>
    </source>
</reference>
<reference key="2">
    <citation type="journal article" date="2007" name="Genome Biol.">
        <title>Assembly of the Candida albicans genome into sixteen supercontigs aligned on the eight chromosomes.</title>
        <authorList>
            <person name="van het Hoog M."/>
            <person name="Rast T.J."/>
            <person name="Martchenko M."/>
            <person name="Grindle S."/>
            <person name="Dignard D."/>
            <person name="Hogues H."/>
            <person name="Cuomo C."/>
            <person name="Berriman M."/>
            <person name="Scherer S."/>
            <person name="Magee B.B."/>
            <person name="Whiteway M."/>
            <person name="Chibana H."/>
            <person name="Nantel A."/>
            <person name="Magee P.T."/>
        </authorList>
    </citation>
    <scope>GENOME REANNOTATION</scope>
    <source>
        <strain>SC5314 / ATCC MYA-2876</strain>
    </source>
</reference>
<reference key="3">
    <citation type="journal article" date="2013" name="Genome Biol.">
        <title>Assembly of a phased diploid Candida albicans genome facilitates allele-specific measurements and provides a simple model for repeat and indel structure.</title>
        <authorList>
            <person name="Muzzey D."/>
            <person name="Schwartz K."/>
            <person name="Weissman J.S."/>
            <person name="Sherlock G."/>
        </authorList>
    </citation>
    <scope>NUCLEOTIDE SEQUENCE [LARGE SCALE GENOMIC DNA]</scope>
    <scope>GENOME REANNOTATION</scope>
    <source>
        <strain>SC5314 / ATCC MYA-2876</strain>
    </source>
</reference>
<comment type="function">
    <text evidence="1">Involved in cell wall 1,6-beta-glucan assembly possibly by the addition of linear side chains of 1,6-linked Glc units to a highly branched 1,6- and 1,3-linked glucan backbone.</text>
</comment>
<comment type="subcellular location">
    <subcellularLocation>
        <location evidence="3">Cell membrane</location>
        <topology evidence="3">Lipid-anchor</topology>
        <topology evidence="3">GPI-anchor</topology>
    </subcellularLocation>
    <subcellularLocation>
        <location evidence="1">Secreted</location>
        <location evidence="1">Cell wall</location>
    </subcellularLocation>
</comment>
<comment type="similarity">
    <text evidence="3">Belongs to the KRE1 family.</text>
</comment>
<gene>
    <name type="primary">KRE1</name>
    <name type="ordered locus">CAALFM_CR03790CA</name>
    <name type="ORF">CaO19.11855</name>
    <name type="ORF">CaO19.4377</name>
    <name type="ORF">orf19.4349.6</name>
</gene>
<organism>
    <name type="scientific">Candida albicans (strain SC5314 / ATCC MYA-2876)</name>
    <name type="common">Yeast</name>
    <dbReference type="NCBI Taxonomy" id="237561"/>
    <lineage>
        <taxon>Eukaryota</taxon>
        <taxon>Fungi</taxon>
        <taxon>Dikarya</taxon>
        <taxon>Ascomycota</taxon>
        <taxon>Saccharomycotina</taxon>
        <taxon>Pichiomycetes</taxon>
        <taxon>Debaryomycetaceae</taxon>
        <taxon>Candida/Lodderomyces clade</taxon>
        <taxon>Candida</taxon>
    </lineage>
</organism>
<name>KRE1_CANAL</name>